<sequence>GQGSLAYPGLRTQGNLETLSGPNDATRGLTSLADTFEHVIEELLDEQQVIQPSKENKDADLYSTRVMLSSQVPLEPPLLFLLEEYKNYLDAANMSMRVRRHSDPARRGELSVCDSTSEWVTAAEKKTAVDMSGATVTVLEKVPVPKGQLKQYFYETKCSSKGYAKEGCRGIDKRYWNSQCRTTQSFVRALTMDNKKRVG</sequence>
<evidence type="ECO:0000250" key="1"/>
<evidence type="ECO:0000255" key="2"/>
<evidence type="ECO:0000256" key="3">
    <source>
        <dbReference type="SAM" id="MobiDB-lite"/>
    </source>
</evidence>
<evidence type="ECO:0000305" key="4"/>
<proteinExistence type="inferred from homology"/>
<protein>
    <recommendedName>
        <fullName evidence="4">Neurotrophic factor BDNF precursor form</fullName>
        <shortName>proBDNF</shortName>
    </recommendedName>
    <alternativeName>
        <fullName>Brain-derived neurotrophic factor</fullName>
    </alternativeName>
    <component>
        <recommendedName>
            <fullName>Neurotrophic factor BDNF</fullName>
        </recommendedName>
    </component>
</protein>
<dbReference type="EMBL" id="AY988029">
    <property type="protein sequence ID" value="AAY44236.1"/>
    <property type="molecule type" value="Genomic_DNA"/>
</dbReference>
<dbReference type="SMR" id="Q1X709"/>
<dbReference type="GlyCosmos" id="Q1X709">
    <property type="glycosylation" value="1 site, No reported glycans"/>
</dbReference>
<dbReference type="GO" id="GO:0030424">
    <property type="term" value="C:axon"/>
    <property type="evidence" value="ECO:0007669"/>
    <property type="project" value="TreeGrafter"/>
</dbReference>
<dbReference type="GO" id="GO:0030425">
    <property type="term" value="C:dendrite"/>
    <property type="evidence" value="ECO:0007669"/>
    <property type="project" value="TreeGrafter"/>
</dbReference>
<dbReference type="GO" id="GO:0005615">
    <property type="term" value="C:extracellular space"/>
    <property type="evidence" value="ECO:0007669"/>
    <property type="project" value="TreeGrafter"/>
</dbReference>
<dbReference type="GO" id="GO:0008021">
    <property type="term" value="C:synaptic vesicle"/>
    <property type="evidence" value="ECO:0007669"/>
    <property type="project" value="TreeGrafter"/>
</dbReference>
<dbReference type="GO" id="GO:0008083">
    <property type="term" value="F:growth factor activity"/>
    <property type="evidence" value="ECO:0007669"/>
    <property type="project" value="UniProtKB-KW"/>
</dbReference>
<dbReference type="GO" id="GO:0005163">
    <property type="term" value="F:nerve growth factor receptor binding"/>
    <property type="evidence" value="ECO:0007669"/>
    <property type="project" value="TreeGrafter"/>
</dbReference>
<dbReference type="GO" id="GO:0007169">
    <property type="term" value="P:cell surface receptor protein tyrosine kinase signaling pathway"/>
    <property type="evidence" value="ECO:0007669"/>
    <property type="project" value="TreeGrafter"/>
</dbReference>
<dbReference type="GO" id="GO:0050804">
    <property type="term" value="P:modulation of chemical synaptic transmission"/>
    <property type="evidence" value="ECO:0007669"/>
    <property type="project" value="TreeGrafter"/>
</dbReference>
<dbReference type="GO" id="GO:0043524">
    <property type="term" value="P:negative regulation of neuron apoptotic process"/>
    <property type="evidence" value="ECO:0007669"/>
    <property type="project" value="TreeGrafter"/>
</dbReference>
<dbReference type="GO" id="GO:0021675">
    <property type="term" value="P:nerve development"/>
    <property type="evidence" value="ECO:0007669"/>
    <property type="project" value="TreeGrafter"/>
</dbReference>
<dbReference type="GO" id="GO:0038180">
    <property type="term" value="P:nerve growth factor signaling pathway"/>
    <property type="evidence" value="ECO:0007669"/>
    <property type="project" value="TreeGrafter"/>
</dbReference>
<dbReference type="GO" id="GO:0048812">
    <property type="term" value="P:neuron projection morphogenesis"/>
    <property type="evidence" value="ECO:0007669"/>
    <property type="project" value="TreeGrafter"/>
</dbReference>
<dbReference type="Gene3D" id="2.10.90.10">
    <property type="entry name" value="Cystine-knot cytokines"/>
    <property type="match status" value="1"/>
</dbReference>
<dbReference type="InterPro" id="IPR020430">
    <property type="entry name" value="Brain-der_neurotrophic_factor"/>
</dbReference>
<dbReference type="InterPro" id="IPR029034">
    <property type="entry name" value="Cystine-knot_cytokine"/>
</dbReference>
<dbReference type="InterPro" id="IPR020408">
    <property type="entry name" value="Nerve_growth_factor-like"/>
</dbReference>
<dbReference type="InterPro" id="IPR002072">
    <property type="entry name" value="Nerve_growth_factor-rel"/>
</dbReference>
<dbReference type="InterPro" id="IPR019846">
    <property type="entry name" value="Nerve_growth_factor_CS"/>
</dbReference>
<dbReference type="PANTHER" id="PTHR11589:SF3">
    <property type="entry name" value="BRAIN-DERIVED NEUROTROPHIC FACTOR"/>
    <property type="match status" value="1"/>
</dbReference>
<dbReference type="PANTHER" id="PTHR11589">
    <property type="entry name" value="NERVE GROWTH FACTOR NGF -RELATED"/>
    <property type="match status" value="1"/>
</dbReference>
<dbReference type="Pfam" id="PF00243">
    <property type="entry name" value="NGF"/>
    <property type="match status" value="1"/>
</dbReference>
<dbReference type="PIRSF" id="PIRSF001789">
    <property type="entry name" value="NGF"/>
    <property type="match status" value="1"/>
</dbReference>
<dbReference type="PRINTS" id="PR01912">
    <property type="entry name" value="BDNFACTOR"/>
</dbReference>
<dbReference type="PRINTS" id="PR00268">
    <property type="entry name" value="NGF"/>
</dbReference>
<dbReference type="SMART" id="SM00140">
    <property type="entry name" value="NGF"/>
    <property type="match status" value="1"/>
</dbReference>
<dbReference type="SUPFAM" id="SSF57501">
    <property type="entry name" value="Cystine-knot cytokines"/>
    <property type="match status" value="1"/>
</dbReference>
<dbReference type="PROSITE" id="PS00248">
    <property type="entry name" value="NGF_1"/>
    <property type="match status" value="1"/>
</dbReference>
<dbReference type="PROSITE" id="PS50270">
    <property type="entry name" value="NGF_2"/>
    <property type="match status" value="1"/>
</dbReference>
<keyword id="KW-0165">Cleavage on pair of basic residues</keyword>
<keyword id="KW-1015">Disulfide bond</keyword>
<keyword id="KW-0325">Glycoprotein</keyword>
<keyword id="KW-0339">Growth factor</keyword>
<keyword id="KW-0964">Secreted</keyword>
<name>BDNF_EUNNO</name>
<gene>
    <name type="primary">BDNF</name>
</gene>
<accession>Q1X709</accession>
<reference key="1">
    <citation type="journal article" date="2006" name="Mol. Phylogenet. Evol.">
        <title>Dispersal and vicariance: the complex evolutionary history of boid snakes.</title>
        <authorList>
            <person name="Noonan B.P."/>
            <person name="Chippindale P.T."/>
        </authorList>
    </citation>
    <scope>NUCLEOTIDE SEQUENCE [GENOMIC DNA]</scope>
</reference>
<feature type="propeptide" id="PRO_0000346687" evidence="1">
    <location>
        <begin position="1" status="less than"/>
        <end position="100"/>
    </location>
</feature>
<feature type="chain" id="PRO_0000346688" description="Neurotrophic factor BDNF">
    <location>
        <begin position="101"/>
        <end position="199" status="greater than"/>
    </location>
</feature>
<feature type="region of interest" description="Disordered" evidence="3">
    <location>
        <begin position="1"/>
        <end position="23"/>
    </location>
</feature>
<feature type="compositionally biased region" description="Polar residues" evidence="3">
    <location>
        <begin position="12"/>
        <end position="23"/>
    </location>
</feature>
<feature type="glycosylation site" description="N-linked (GlcNAc...) asparagine" evidence="2">
    <location>
        <position position="93"/>
    </location>
</feature>
<feature type="disulfide bond" evidence="1">
    <location>
        <begin position="113"/>
        <end position="180"/>
    </location>
</feature>
<feature type="non-terminal residue">
    <location>
        <position position="1"/>
    </location>
</feature>
<feature type="non-terminal residue">
    <location>
        <position position="199"/>
    </location>
</feature>
<comment type="function">
    <text evidence="1">Promotes the survival of neuronal populations that are all located either in the central nervous system or directly connected to it.</text>
</comment>
<comment type="subcellular location">
    <subcellularLocation>
        <location evidence="1">Secreted</location>
    </subcellularLocation>
</comment>
<comment type="similarity">
    <text evidence="4">Belongs to the NGF-beta family.</text>
</comment>
<organism>
    <name type="scientific">Eunectes notaeus</name>
    <name type="common">Yellow anaconda</name>
    <dbReference type="NCBI Taxonomy" id="51877"/>
    <lineage>
        <taxon>Eukaryota</taxon>
        <taxon>Metazoa</taxon>
        <taxon>Chordata</taxon>
        <taxon>Craniata</taxon>
        <taxon>Vertebrata</taxon>
        <taxon>Euteleostomi</taxon>
        <taxon>Lepidosauria</taxon>
        <taxon>Squamata</taxon>
        <taxon>Bifurcata</taxon>
        <taxon>Unidentata</taxon>
        <taxon>Episquamata</taxon>
        <taxon>Toxicofera</taxon>
        <taxon>Serpentes</taxon>
        <taxon>Henophidia</taxon>
        <taxon>Boidae</taxon>
        <taxon>Boinae</taxon>
        <taxon>Eunectes</taxon>
    </lineage>
</organism>